<proteinExistence type="evidence at protein level"/>
<reference key="1">
    <citation type="submission" date="1996-02" db="EMBL/GenBank/DDBJ databases">
        <title>Systematic sequencing of the Escherichia coli genome: analysis of the 4.0 - 6.0 min (189,987 - 281,416bp) region.</title>
        <authorList>
            <person name="Takemoto K."/>
            <person name="Mori H."/>
            <person name="Murayama N."/>
            <person name="Kataoka K."/>
            <person name="Yano M."/>
            <person name="Itoh T."/>
            <person name="Yamamoto Y."/>
            <person name="Inokuchi H."/>
            <person name="Miki T."/>
            <person name="Hatada E."/>
            <person name="Fukuda R."/>
            <person name="Ichihara S."/>
            <person name="Mizuno T."/>
            <person name="Makino K."/>
            <person name="Nakata A."/>
            <person name="Yura T."/>
            <person name="Sampei G."/>
            <person name="Mizobuchi K."/>
        </authorList>
    </citation>
    <scope>NUCLEOTIDE SEQUENCE [LARGE SCALE GENOMIC DNA]</scope>
    <source>
        <strain>K12 / W3110 / ATCC 27325 / DSM 5911</strain>
    </source>
</reference>
<reference key="2">
    <citation type="submission" date="1997-01" db="EMBL/GenBank/DDBJ databases">
        <title>Sequence of minutes 4-25 of Escherichia coli.</title>
        <authorList>
            <person name="Chung E."/>
            <person name="Allen E."/>
            <person name="Araujo R."/>
            <person name="Aparicio A.M."/>
            <person name="Davis K."/>
            <person name="Duncan M."/>
            <person name="Federspiel N."/>
            <person name="Hyman R."/>
            <person name="Kalman S."/>
            <person name="Komp C."/>
            <person name="Kurdi O."/>
            <person name="Lew H."/>
            <person name="Lin D."/>
            <person name="Namath A."/>
            <person name="Oefner P."/>
            <person name="Roberts D."/>
            <person name="Schramm S."/>
            <person name="Davis R.W."/>
        </authorList>
    </citation>
    <scope>NUCLEOTIDE SEQUENCE [LARGE SCALE GENOMIC DNA]</scope>
    <source>
        <strain>K12 / MG1655 / ATCC 47076</strain>
    </source>
</reference>
<reference key="3">
    <citation type="journal article" date="1997" name="Science">
        <title>The complete genome sequence of Escherichia coli K-12.</title>
        <authorList>
            <person name="Blattner F.R."/>
            <person name="Plunkett G. III"/>
            <person name="Bloch C.A."/>
            <person name="Perna N.T."/>
            <person name="Burland V."/>
            <person name="Riley M."/>
            <person name="Collado-Vides J."/>
            <person name="Glasner J.D."/>
            <person name="Rode C.K."/>
            <person name="Mayhew G.F."/>
            <person name="Gregor J."/>
            <person name="Davis N.W."/>
            <person name="Kirkpatrick H.A."/>
            <person name="Goeden M.A."/>
            <person name="Rose D.J."/>
            <person name="Mau B."/>
            <person name="Shao Y."/>
        </authorList>
    </citation>
    <scope>NUCLEOTIDE SEQUENCE [LARGE SCALE GENOMIC DNA]</scope>
    <source>
        <strain>K12 / MG1655 / ATCC 47076</strain>
    </source>
</reference>
<reference key="4">
    <citation type="journal article" date="2006" name="Mol. Syst. Biol.">
        <title>Highly accurate genome sequences of Escherichia coli K-12 strains MG1655 and W3110.</title>
        <authorList>
            <person name="Hayashi K."/>
            <person name="Morooka N."/>
            <person name="Yamamoto Y."/>
            <person name="Fujita K."/>
            <person name="Isono K."/>
            <person name="Choi S."/>
            <person name="Ohtsubo E."/>
            <person name="Baba T."/>
            <person name="Wanner B.L."/>
            <person name="Mori H."/>
            <person name="Horiuchi T."/>
        </authorList>
    </citation>
    <scope>NUCLEOTIDE SEQUENCE [LARGE SCALE GENOMIC DNA]</scope>
    <scope>SEQUENCE REVISION TO 123; 130; 142 AND 159</scope>
    <source>
        <strain>K12 / W3110 / ATCC 27325 / DSM 5911</strain>
    </source>
</reference>
<reference key="5">
    <citation type="journal article" date="1999" name="J. Bacteriol.">
        <title>S-methylmethionine metabolism in Escherichia coli.</title>
        <authorList>
            <person name="Thanbichler M."/>
            <person name="Neuhierl B."/>
            <person name="Boeck A."/>
        </authorList>
    </citation>
    <scope>FUNCTION</scope>
</reference>
<reference key="6">
    <citation type="journal article" date="1999" name="J. Biol. Chem.">
        <title>A family of S-methylmethionine-dependent thiol/selenol methyltransferases. Role in selenium tolerance and evolutionary relation.</title>
        <authorList>
            <person name="Neuhierl B."/>
            <person name="Thanbichler M."/>
            <person name="Lottspeich F."/>
            <person name="Boeck A."/>
        </authorList>
    </citation>
    <scope>SUBSTRATE SPECIFICITY</scope>
    <scope>BIOPHYSICOCHEMICAL PROPERTIES</scope>
    <scope>SUBUNIT</scope>
    <source>
        <strain>K12 / JM109 / ATCC 53323</strain>
    </source>
</reference>
<sequence length="310" mass="33423">MSQNNPLRALLDKQDILLLDGAMATELEARGCNLADSLWSAKVLVENPELIREVHLDYYRAGAQCAITASYQATPAGFAARGLDEAQSKALIGKSVELARKAREAYLAENPQAGTLLVAGSVGPYGAYLADGSEYRGDYHCSVEAFQAFHRPRVEALLDAGADLLACETLPNFSEIEALAELLTAYPRARAWFSFTLRDSEHLSDGTPLRDVVALLAGYPQVVALGINCIALENTTAALQHLHGLTVLPLVVYPNSGEHYDAVSKTWHHHGEHCAQLADYLPQWQAAGARLIGGCCRTTPADIAALKARS</sequence>
<feature type="chain" id="PRO_0000114610" description="Homocysteine S-methyltransferase">
    <location>
        <begin position="1"/>
        <end position="310"/>
    </location>
</feature>
<feature type="domain" description="Hcy-binding" evidence="1">
    <location>
        <begin position="1"/>
        <end position="310"/>
    </location>
</feature>
<feature type="binding site" evidence="1">
    <location>
        <position position="229"/>
    </location>
    <ligand>
        <name>Zn(2+)</name>
        <dbReference type="ChEBI" id="CHEBI:29105"/>
    </ligand>
</feature>
<feature type="binding site" evidence="1">
    <location>
        <position position="295"/>
    </location>
    <ligand>
        <name>Zn(2+)</name>
        <dbReference type="ChEBI" id="CHEBI:29105"/>
    </ligand>
</feature>
<feature type="binding site" evidence="1">
    <location>
        <position position="296"/>
    </location>
    <ligand>
        <name>Zn(2+)</name>
        <dbReference type="ChEBI" id="CHEBI:29105"/>
    </ligand>
</feature>
<feature type="helix" evidence="5">
    <location>
        <begin position="8"/>
        <end position="11"/>
    </location>
</feature>
<feature type="strand" evidence="6">
    <location>
        <begin position="17"/>
        <end position="19"/>
    </location>
</feature>
<feature type="helix" evidence="5">
    <location>
        <begin position="24"/>
        <end position="29"/>
    </location>
</feature>
<feature type="helix" evidence="5">
    <location>
        <begin position="39"/>
        <end position="46"/>
    </location>
</feature>
<feature type="helix" evidence="5">
    <location>
        <begin position="48"/>
        <end position="61"/>
    </location>
</feature>
<feature type="strand" evidence="5">
    <location>
        <begin position="64"/>
        <end position="67"/>
    </location>
</feature>
<feature type="turn" evidence="4">
    <location>
        <begin position="69"/>
        <end position="72"/>
    </location>
</feature>
<feature type="helix" evidence="5">
    <location>
        <begin position="75"/>
        <end position="78"/>
    </location>
</feature>
<feature type="helix" evidence="5">
    <location>
        <begin position="79"/>
        <end position="81"/>
    </location>
</feature>
<feature type="helix" evidence="5">
    <location>
        <begin position="85"/>
        <end position="109"/>
    </location>
</feature>
<feature type="helix" evidence="5">
    <location>
        <begin position="111"/>
        <end position="113"/>
    </location>
</feature>
<feature type="strand" evidence="5">
    <location>
        <begin position="117"/>
        <end position="122"/>
    </location>
</feature>
<feature type="helix" evidence="5">
    <location>
        <begin position="125"/>
        <end position="129"/>
    </location>
</feature>
<feature type="turn" evidence="5">
    <location>
        <begin position="133"/>
        <end position="136"/>
    </location>
</feature>
<feature type="helix" evidence="5">
    <location>
        <begin position="143"/>
        <end position="159"/>
    </location>
</feature>
<feature type="strand" evidence="5">
    <location>
        <begin position="163"/>
        <end position="170"/>
    </location>
</feature>
<feature type="helix" evidence="5">
    <location>
        <begin position="173"/>
        <end position="183"/>
    </location>
</feature>
<feature type="strand" evidence="5">
    <location>
        <begin position="191"/>
        <end position="195"/>
    </location>
</feature>
<feature type="strand" evidence="5">
    <location>
        <begin position="197"/>
        <end position="199"/>
    </location>
</feature>
<feature type="helix" evidence="5">
    <location>
        <begin position="209"/>
        <end position="217"/>
    </location>
</feature>
<feature type="strand" evidence="5">
    <location>
        <begin position="222"/>
        <end position="229"/>
    </location>
</feature>
<feature type="helix" evidence="5">
    <location>
        <begin position="232"/>
        <end position="234"/>
    </location>
</feature>
<feature type="helix" evidence="5">
    <location>
        <begin position="235"/>
        <end position="243"/>
    </location>
</feature>
<feature type="strand" evidence="5">
    <location>
        <begin position="250"/>
        <end position="253"/>
    </location>
</feature>
<feature type="helix" evidence="5">
    <location>
        <begin position="277"/>
        <end position="280"/>
    </location>
</feature>
<feature type="helix" evidence="5">
    <location>
        <begin position="281"/>
        <end position="286"/>
    </location>
</feature>
<feature type="strand" evidence="5">
    <location>
        <begin position="289"/>
        <end position="292"/>
    </location>
</feature>
<feature type="helix" evidence="5">
    <location>
        <begin position="300"/>
        <end position="309"/>
    </location>
</feature>
<protein>
    <recommendedName>
        <fullName>Homocysteine S-methyltransferase</fullName>
        <ecNumber>2.1.1.10</ecNumber>
    </recommendedName>
    <alternativeName>
        <fullName>S-methylmethionine:homocysteine methyltransferase</fullName>
    </alternativeName>
</protein>
<keyword id="KW-0002">3D-structure</keyword>
<keyword id="KW-0028">Amino-acid biosynthesis</keyword>
<keyword id="KW-0479">Metal-binding</keyword>
<keyword id="KW-0486">Methionine biosynthesis</keyword>
<keyword id="KW-0489">Methyltransferase</keyword>
<keyword id="KW-1185">Reference proteome</keyword>
<keyword id="KW-0949">S-adenosyl-L-methionine</keyword>
<keyword id="KW-0808">Transferase</keyword>
<keyword id="KW-0862">Zinc</keyword>
<gene>
    <name type="primary">mmuM</name>
    <name type="synonym">yagD</name>
    <name type="ordered locus">b0261</name>
    <name type="ordered locus">JW0253</name>
</gene>
<comment type="function">
    <text evidence="3">Catalyzes methyl transfer from S-methylmethionine or S-adenosylmethionine (less efficient) to homocysteine, selenohomocysteine and less efficiently selenocysteine.</text>
</comment>
<comment type="catalytic activity">
    <reaction>
        <text>S-methyl-L-methionine + L-homocysteine = 2 L-methionine + H(+)</text>
        <dbReference type="Rhea" id="RHEA:26337"/>
        <dbReference type="ChEBI" id="CHEBI:15378"/>
        <dbReference type="ChEBI" id="CHEBI:57844"/>
        <dbReference type="ChEBI" id="CHEBI:58199"/>
        <dbReference type="ChEBI" id="CHEBI:58252"/>
        <dbReference type="EC" id="2.1.1.10"/>
    </reaction>
</comment>
<comment type="cofactor">
    <cofactor evidence="1">
        <name>Zn(2+)</name>
        <dbReference type="ChEBI" id="CHEBI:29105"/>
    </cofactor>
</comment>
<comment type="biophysicochemical properties">
    <kinetics>
        <KM evidence="2">0.045 mM for L-homocysteine</KM>
        <KM evidence="2">0.59 mM for L-selenocysteine</KM>
        <KM evidence="2">0.043 mM for DL-selenohomocysteine</KM>
    </kinetics>
</comment>
<comment type="subunit">
    <text evidence="2">Monomer.</text>
</comment>
<organism>
    <name type="scientific">Escherichia coli (strain K12)</name>
    <dbReference type="NCBI Taxonomy" id="83333"/>
    <lineage>
        <taxon>Bacteria</taxon>
        <taxon>Pseudomonadati</taxon>
        <taxon>Pseudomonadota</taxon>
        <taxon>Gammaproteobacteria</taxon>
        <taxon>Enterobacterales</taxon>
        <taxon>Enterobacteriaceae</taxon>
        <taxon>Escherichia</taxon>
    </lineage>
</organism>
<dbReference type="EC" id="2.1.1.10"/>
<dbReference type="EMBL" id="U70214">
    <property type="protein sequence ID" value="AAB08682.1"/>
    <property type="molecule type" value="Genomic_DNA"/>
</dbReference>
<dbReference type="EMBL" id="U00096">
    <property type="protein sequence ID" value="AAC73364.1"/>
    <property type="molecule type" value="Genomic_DNA"/>
</dbReference>
<dbReference type="EMBL" id="AP009048">
    <property type="protein sequence ID" value="BAA77929.2"/>
    <property type="molecule type" value="Genomic_DNA"/>
</dbReference>
<dbReference type="PIR" id="E64751">
    <property type="entry name" value="E64751"/>
</dbReference>
<dbReference type="RefSeq" id="NP_414795.1">
    <property type="nucleotide sequence ID" value="NC_000913.3"/>
</dbReference>
<dbReference type="RefSeq" id="WP_000081352.1">
    <property type="nucleotide sequence ID" value="NZ_SSUR01000059.1"/>
</dbReference>
<dbReference type="RefSeq" id="YP_001816637.1">
    <property type="nucleotide sequence ID" value="NC_010558.1"/>
</dbReference>
<dbReference type="PDB" id="5DML">
    <property type="method" value="X-ray"/>
    <property type="resolution" value="2.45 A"/>
    <property type="chains" value="A=1-310"/>
</dbReference>
<dbReference type="PDB" id="5DMM">
    <property type="method" value="X-ray"/>
    <property type="resolution" value="1.78 A"/>
    <property type="chains" value="A=1-310"/>
</dbReference>
<dbReference type="PDB" id="5DMN">
    <property type="method" value="X-ray"/>
    <property type="resolution" value="2.89 A"/>
    <property type="chains" value="A/B=1-310"/>
</dbReference>
<dbReference type="PDBsum" id="5DML"/>
<dbReference type="PDBsum" id="5DMM"/>
<dbReference type="PDBsum" id="5DMN"/>
<dbReference type="SMR" id="Q47690"/>
<dbReference type="BioGRID" id="4259777">
    <property type="interactions" value="11"/>
</dbReference>
<dbReference type="BioGRID" id="850503">
    <property type="interactions" value="3"/>
</dbReference>
<dbReference type="FunCoup" id="Q47690">
    <property type="interactions" value="409"/>
</dbReference>
<dbReference type="IntAct" id="Q47690">
    <property type="interactions" value="5"/>
</dbReference>
<dbReference type="STRING" id="511145.b0261"/>
<dbReference type="jPOST" id="Q47690"/>
<dbReference type="PaxDb" id="511145-b0261"/>
<dbReference type="EnsemblBacteria" id="AAC73364">
    <property type="protein sequence ID" value="AAC73364"/>
    <property type="gene ID" value="b0261"/>
</dbReference>
<dbReference type="GeneID" id="946143"/>
<dbReference type="KEGG" id="ecj:JW0253"/>
<dbReference type="KEGG" id="eco:b0261"/>
<dbReference type="KEGG" id="ecoc:C3026_01260"/>
<dbReference type="PATRIC" id="fig|1411691.4.peg.2020"/>
<dbReference type="eggNOG" id="COG2040">
    <property type="taxonomic scope" value="Bacteria"/>
</dbReference>
<dbReference type="HOGENOM" id="CLU_004914_3_2_6"/>
<dbReference type="InParanoid" id="Q47690"/>
<dbReference type="OMA" id="CSQPEVI"/>
<dbReference type="OrthoDB" id="9803687at2"/>
<dbReference type="PhylomeDB" id="Q47690"/>
<dbReference type="BioCyc" id="EcoCyc:MMUM-MONOMER"/>
<dbReference type="BioCyc" id="MetaCyc:MMUM-MONOMER"/>
<dbReference type="BRENDA" id="2.1.1.10">
    <property type="organism ID" value="2026"/>
</dbReference>
<dbReference type="BRENDA" id="2.1.1.280">
    <property type="organism ID" value="2026"/>
</dbReference>
<dbReference type="SABIO-RK" id="Q47690"/>
<dbReference type="EvolutionaryTrace" id="Q47690"/>
<dbReference type="PRO" id="PR:Q47690"/>
<dbReference type="Proteomes" id="UP000000625">
    <property type="component" value="Chromosome"/>
</dbReference>
<dbReference type="GO" id="GO:0008898">
    <property type="term" value="F:S-adenosylmethionine-homocysteine S-methyltransferase activity"/>
    <property type="evidence" value="ECO:0000314"/>
    <property type="project" value="EcoCyc"/>
</dbReference>
<dbReference type="GO" id="GO:0061627">
    <property type="term" value="F:S-methylmethionine-homocysteine S-methyltransferase activity"/>
    <property type="evidence" value="ECO:0007669"/>
    <property type="project" value="RHEA"/>
</dbReference>
<dbReference type="GO" id="GO:0008270">
    <property type="term" value="F:zinc ion binding"/>
    <property type="evidence" value="ECO:0000314"/>
    <property type="project" value="EcoCyc"/>
</dbReference>
<dbReference type="GO" id="GO:0006974">
    <property type="term" value="P:DNA damage response"/>
    <property type="evidence" value="ECO:0000270"/>
    <property type="project" value="EcoliWiki"/>
</dbReference>
<dbReference type="GO" id="GO:0009086">
    <property type="term" value="P:methionine biosynthetic process"/>
    <property type="evidence" value="ECO:0000318"/>
    <property type="project" value="GO_Central"/>
</dbReference>
<dbReference type="GO" id="GO:0032259">
    <property type="term" value="P:methylation"/>
    <property type="evidence" value="ECO:0007669"/>
    <property type="project" value="UniProtKB-KW"/>
</dbReference>
<dbReference type="GO" id="GO:0033528">
    <property type="term" value="P:S-methylmethionine cycle"/>
    <property type="evidence" value="ECO:0000318"/>
    <property type="project" value="GO_Central"/>
</dbReference>
<dbReference type="GO" id="GO:0033477">
    <property type="term" value="P:S-methylmethionine metabolic process"/>
    <property type="evidence" value="ECO:0000315"/>
    <property type="project" value="EcoCyc"/>
</dbReference>
<dbReference type="FunFam" id="3.20.20.330:FF:000002">
    <property type="entry name" value="Homocysteine S-methyltransferase"/>
    <property type="match status" value="1"/>
</dbReference>
<dbReference type="Gene3D" id="3.20.20.330">
    <property type="entry name" value="Homocysteine-binding-like domain"/>
    <property type="match status" value="1"/>
</dbReference>
<dbReference type="InterPro" id="IPR017226">
    <property type="entry name" value="Betaine-hCys_S-MeTrfase_BHMT"/>
</dbReference>
<dbReference type="InterPro" id="IPR003726">
    <property type="entry name" value="HCY_dom"/>
</dbReference>
<dbReference type="InterPro" id="IPR036589">
    <property type="entry name" value="HCY_dom_sf"/>
</dbReference>
<dbReference type="InterPro" id="IPR051486">
    <property type="entry name" value="Hcy_S-methyltransferase"/>
</dbReference>
<dbReference type="NCBIfam" id="NF007020">
    <property type="entry name" value="PRK09485.1"/>
    <property type="match status" value="1"/>
</dbReference>
<dbReference type="PANTHER" id="PTHR46015:SF1">
    <property type="entry name" value="HOMOCYSTEINE S-METHYLTRANSFERASE-LIKE ISOFORM 1"/>
    <property type="match status" value="1"/>
</dbReference>
<dbReference type="PANTHER" id="PTHR46015">
    <property type="entry name" value="ZGC:172121"/>
    <property type="match status" value="1"/>
</dbReference>
<dbReference type="Pfam" id="PF02574">
    <property type="entry name" value="S-methyl_trans"/>
    <property type="match status" value="1"/>
</dbReference>
<dbReference type="PIRSF" id="PIRSF037505">
    <property type="entry name" value="Betaine_HMT"/>
    <property type="match status" value="1"/>
</dbReference>
<dbReference type="SUPFAM" id="SSF82282">
    <property type="entry name" value="Homocysteine S-methyltransferase"/>
    <property type="match status" value="1"/>
</dbReference>
<dbReference type="PROSITE" id="PS50970">
    <property type="entry name" value="HCY"/>
    <property type="match status" value="1"/>
</dbReference>
<name>MMUM_ECOLI</name>
<accession>Q47690</accession>
<accession>P77226</accession>
<evidence type="ECO:0000255" key="1">
    <source>
        <dbReference type="PROSITE-ProRule" id="PRU00333"/>
    </source>
</evidence>
<evidence type="ECO:0000269" key="2">
    <source>
    </source>
</evidence>
<evidence type="ECO:0000269" key="3">
    <source>
    </source>
</evidence>
<evidence type="ECO:0007829" key="4">
    <source>
        <dbReference type="PDB" id="5DML"/>
    </source>
</evidence>
<evidence type="ECO:0007829" key="5">
    <source>
        <dbReference type="PDB" id="5DMM"/>
    </source>
</evidence>
<evidence type="ECO:0007829" key="6">
    <source>
        <dbReference type="PDB" id="5DMN"/>
    </source>
</evidence>